<protein>
    <recommendedName>
        <fullName evidence="1">Small ribosomal subunit protein uS11</fullName>
    </recommendedName>
    <alternativeName>
        <fullName evidence="3">30S ribosomal protein S11</fullName>
    </alternativeName>
</protein>
<gene>
    <name evidence="1" type="primary">rpsK</name>
    <name type="ordered locus">CLK_2897</name>
</gene>
<evidence type="ECO:0000255" key="1">
    <source>
        <dbReference type="HAMAP-Rule" id="MF_01310"/>
    </source>
</evidence>
<evidence type="ECO:0000256" key="2">
    <source>
        <dbReference type="SAM" id="MobiDB-lite"/>
    </source>
</evidence>
<evidence type="ECO:0000305" key="3"/>
<sequence length="132" mass="14140">MAAGMKGKRSRRRKERKNVEHGCAHIKSTFNNSIVTITDSVGNTLSWASAGGLGFRGSRKSTPFAAQMAAETAAKTAMEHGLKSIEVYVKGPGSGREAAIRSLQAAGLEVTLIKDVTPIPHNGCRPPKRRRV</sequence>
<proteinExistence type="inferred from homology"/>
<keyword id="KW-0687">Ribonucleoprotein</keyword>
<keyword id="KW-0689">Ribosomal protein</keyword>
<keyword id="KW-0694">RNA-binding</keyword>
<keyword id="KW-0699">rRNA-binding</keyword>
<dbReference type="EMBL" id="CP000962">
    <property type="protein sequence ID" value="ACA55262.1"/>
    <property type="molecule type" value="Genomic_DNA"/>
</dbReference>
<dbReference type="RefSeq" id="WP_012343267.1">
    <property type="nucleotide sequence ID" value="NC_010520.1"/>
</dbReference>
<dbReference type="SMR" id="B1KSJ8"/>
<dbReference type="KEGG" id="cbl:CLK_2897"/>
<dbReference type="HOGENOM" id="CLU_072439_5_0_9"/>
<dbReference type="GO" id="GO:1990904">
    <property type="term" value="C:ribonucleoprotein complex"/>
    <property type="evidence" value="ECO:0007669"/>
    <property type="project" value="UniProtKB-KW"/>
</dbReference>
<dbReference type="GO" id="GO:0005840">
    <property type="term" value="C:ribosome"/>
    <property type="evidence" value="ECO:0007669"/>
    <property type="project" value="UniProtKB-KW"/>
</dbReference>
<dbReference type="GO" id="GO:0019843">
    <property type="term" value="F:rRNA binding"/>
    <property type="evidence" value="ECO:0007669"/>
    <property type="project" value="UniProtKB-UniRule"/>
</dbReference>
<dbReference type="GO" id="GO:0003735">
    <property type="term" value="F:structural constituent of ribosome"/>
    <property type="evidence" value="ECO:0007669"/>
    <property type="project" value="InterPro"/>
</dbReference>
<dbReference type="GO" id="GO:0006412">
    <property type="term" value="P:translation"/>
    <property type="evidence" value="ECO:0007669"/>
    <property type="project" value="UniProtKB-UniRule"/>
</dbReference>
<dbReference type="FunFam" id="3.30.420.80:FF:000001">
    <property type="entry name" value="30S ribosomal protein S11"/>
    <property type="match status" value="1"/>
</dbReference>
<dbReference type="Gene3D" id="3.30.420.80">
    <property type="entry name" value="Ribosomal protein S11"/>
    <property type="match status" value="1"/>
</dbReference>
<dbReference type="HAMAP" id="MF_01310">
    <property type="entry name" value="Ribosomal_uS11"/>
    <property type="match status" value="1"/>
</dbReference>
<dbReference type="InterPro" id="IPR001971">
    <property type="entry name" value="Ribosomal_uS11"/>
</dbReference>
<dbReference type="InterPro" id="IPR019981">
    <property type="entry name" value="Ribosomal_uS11_bac-type"/>
</dbReference>
<dbReference type="InterPro" id="IPR018102">
    <property type="entry name" value="Ribosomal_uS11_CS"/>
</dbReference>
<dbReference type="InterPro" id="IPR036967">
    <property type="entry name" value="Ribosomal_uS11_sf"/>
</dbReference>
<dbReference type="NCBIfam" id="NF003698">
    <property type="entry name" value="PRK05309.1"/>
    <property type="match status" value="1"/>
</dbReference>
<dbReference type="NCBIfam" id="TIGR03632">
    <property type="entry name" value="uS11_bact"/>
    <property type="match status" value="1"/>
</dbReference>
<dbReference type="PANTHER" id="PTHR11759">
    <property type="entry name" value="40S RIBOSOMAL PROTEIN S14/30S RIBOSOMAL PROTEIN S11"/>
    <property type="match status" value="1"/>
</dbReference>
<dbReference type="Pfam" id="PF00411">
    <property type="entry name" value="Ribosomal_S11"/>
    <property type="match status" value="1"/>
</dbReference>
<dbReference type="PIRSF" id="PIRSF002131">
    <property type="entry name" value="Ribosomal_S11"/>
    <property type="match status" value="1"/>
</dbReference>
<dbReference type="SUPFAM" id="SSF53137">
    <property type="entry name" value="Translational machinery components"/>
    <property type="match status" value="1"/>
</dbReference>
<dbReference type="PROSITE" id="PS00054">
    <property type="entry name" value="RIBOSOMAL_S11"/>
    <property type="match status" value="1"/>
</dbReference>
<feature type="chain" id="PRO_1000141073" description="Small ribosomal subunit protein uS11">
    <location>
        <begin position="1"/>
        <end position="132"/>
    </location>
</feature>
<feature type="region of interest" description="Disordered" evidence="2">
    <location>
        <begin position="1"/>
        <end position="20"/>
    </location>
</feature>
<feature type="compositionally biased region" description="Basic residues" evidence="2">
    <location>
        <begin position="1"/>
        <end position="16"/>
    </location>
</feature>
<comment type="function">
    <text evidence="1">Located on the platform of the 30S subunit, it bridges several disparate RNA helices of the 16S rRNA. Forms part of the Shine-Dalgarno cleft in the 70S ribosome.</text>
</comment>
<comment type="subunit">
    <text evidence="1">Part of the 30S ribosomal subunit. Interacts with proteins S7 and S18. Binds to IF-3.</text>
</comment>
<comment type="similarity">
    <text evidence="1">Belongs to the universal ribosomal protein uS11 family.</text>
</comment>
<organism>
    <name type="scientific">Clostridium botulinum (strain Loch Maree / Type A3)</name>
    <dbReference type="NCBI Taxonomy" id="498214"/>
    <lineage>
        <taxon>Bacteria</taxon>
        <taxon>Bacillati</taxon>
        <taxon>Bacillota</taxon>
        <taxon>Clostridia</taxon>
        <taxon>Eubacteriales</taxon>
        <taxon>Clostridiaceae</taxon>
        <taxon>Clostridium</taxon>
    </lineage>
</organism>
<accession>B1KSJ8</accession>
<reference key="1">
    <citation type="journal article" date="2007" name="PLoS ONE">
        <title>Analysis of the neurotoxin complex genes in Clostridium botulinum A1-A4 and B1 strains: BoNT/A3, /Ba4 and /B1 clusters are located within plasmids.</title>
        <authorList>
            <person name="Smith T.J."/>
            <person name="Hill K.K."/>
            <person name="Foley B.T."/>
            <person name="Detter J.C."/>
            <person name="Munk A.C."/>
            <person name="Bruce D.C."/>
            <person name="Doggett N.A."/>
            <person name="Smith L.A."/>
            <person name="Marks J.D."/>
            <person name="Xie G."/>
            <person name="Brettin T.S."/>
        </authorList>
    </citation>
    <scope>NUCLEOTIDE SEQUENCE [LARGE SCALE GENOMIC DNA]</scope>
    <source>
        <strain>Loch Maree / Type A3</strain>
    </source>
</reference>
<name>RS11_CLOBM</name>